<name>LUXU_VIBVU</name>
<keyword id="KW-0597">Phosphoprotein</keyword>
<keyword id="KW-0902">Two-component regulatory system</keyword>
<evidence type="ECO:0000250" key="1"/>
<evidence type="ECO:0000255" key="2">
    <source>
        <dbReference type="PROSITE-ProRule" id="PRU00110"/>
    </source>
</evidence>
<feature type="chain" id="PRO_0000220143" description="Phosphorelay protein LuxU">
    <location>
        <begin position="1"/>
        <end position="115"/>
    </location>
</feature>
<feature type="domain" description="HPt" evidence="2">
    <location>
        <begin position="17"/>
        <end position="107"/>
    </location>
</feature>
<feature type="modified residue" description="Phosphohistidine" evidence="2">
    <location>
        <position position="56"/>
    </location>
</feature>
<reference key="1">
    <citation type="submission" date="2002-12" db="EMBL/GenBank/DDBJ databases">
        <title>Complete genome sequence of Vibrio vulnificus CMCP6.</title>
        <authorList>
            <person name="Rhee J.H."/>
            <person name="Kim S.Y."/>
            <person name="Chung S.S."/>
            <person name="Kim J.J."/>
            <person name="Moon Y.H."/>
            <person name="Jeong H."/>
            <person name="Choy H.E."/>
        </authorList>
    </citation>
    <scope>NUCLEOTIDE SEQUENCE [LARGE SCALE GENOMIC DNA]</scope>
    <source>
        <strain>CMCP6</strain>
    </source>
</reference>
<organism>
    <name type="scientific">Vibrio vulnificus (strain CMCP6)</name>
    <dbReference type="NCBI Taxonomy" id="216895"/>
    <lineage>
        <taxon>Bacteria</taxon>
        <taxon>Pseudomonadati</taxon>
        <taxon>Pseudomonadota</taxon>
        <taxon>Gammaproteobacteria</taxon>
        <taxon>Vibrionales</taxon>
        <taxon>Vibrionaceae</taxon>
        <taxon>Vibrio</taxon>
    </lineage>
</organism>
<dbReference type="EMBL" id="AE016795">
    <property type="protein sequence ID" value="AAO11413.1"/>
    <property type="molecule type" value="Genomic_DNA"/>
</dbReference>
<dbReference type="RefSeq" id="WP_011080891.1">
    <property type="nucleotide sequence ID" value="NC_004459.3"/>
</dbReference>
<dbReference type="SMR" id="Q8D892"/>
<dbReference type="KEGG" id="vvu:VV1_3090"/>
<dbReference type="HOGENOM" id="CLU_168256_0_0_6"/>
<dbReference type="Proteomes" id="UP000002275">
    <property type="component" value="Chromosome 1"/>
</dbReference>
<dbReference type="GO" id="GO:0004672">
    <property type="term" value="F:protein kinase activity"/>
    <property type="evidence" value="ECO:0007669"/>
    <property type="project" value="UniProtKB-ARBA"/>
</dbReference>
<dbReference type="GO" id="GO:0000160">
    <property type="term" value="P:phosphorelay signal transduction system"/>
    <property type="evidence" value="ECO:0007669"/>
    <property type="project" value="UniProtKB-KW"/>
</dbReference>
<dbReference type="Gene3D" id="1.20.120.160">
    <property type="entry name" value="HPT domain"/>
    <property type="match status" value="1"/>
</dbReference>
<dbReference type="InterPro" id="IPR036641">
    <property type="entry name" value="HPT_dom_sf"/>
</dbReference>
<dbReference type="InterPro" id="IPR053403">
    <property type="entry name" value="QS_phosphorelay_intermediate"/>
</dbReference>
<dbReference type="InterPro" id="IPR008207">
    <property type="entry name" value="Sig_transdc_His_kin_Hpt_dom"/>
</dbReference>
<dbReference type="NCBIfam" id="NF041948">
    <property type="entry name" value="Phrelay_LuxU_Vib"/>
    <property type="match status" value="1"/>
</dbReference>
<dbReference type="Pfam" id="PF01627">
    <property type="entry name" value="Hpt"/>
    <property type="match status" value="1"/>
</dbReference>
<dbReference type="SUPFAM" id="SSF47226">
    <property type="entry name" value="Histidine-containing phosphotransfer domain, HPT domain"/>
    <property type="match status" value="1"/>
</dbReference>
<dbReference type="PROSITE" id="PS50894">
    <property type="entry name" value="HPT"/>
    <property type="match status" value="1"/>
</dbReference>
<sequence length="115" mass="12752">MELLNQKKIASLTEEIGADNVPVLLEIFLSELESYLKVLCDATYSDKLVYLKDISHALKSSAASFGADALCHFAVEIDTRAKEGDALDETQDVVAMIDRLHQTQQAYLSWQANGF</sequence>
<protein>
    <recommendedName>
        <fullName>Phosphorelay protein LuxU</fullName>
    </recommendedName>
</protein>
<gene>
    <name type="primary">luxU</name>
    <name type="ordered locus">VV1_3090</name>
</gene>
<comment type="function">
    <text>Phosphorelay protein which receives a sensory signal from a sensor kinase and transmit it to LuxO. At low cell density, a phosphoryl group is transferred from the sensor kinase, probably on His-56 and this phosphoryl group is further transferred to LuxO.</text>
</comment>
<comment type="subunit">
    <text evidence="1">Monomer.</text>
</comment>
<proteinExistence type="inferred from homology"/>
<accession>Q8D892</accession>